<organism>
    <name type="scientific">Danio rerio</name>
    <name type="common">Zebrafish</name>
    <name type="synonym">Brachydanio rerio</name>
    <dbReference type="NCBI Taxonomy" id="7955"/>
    <lineage>
        <taxon>Eukaryota</taxon>
        <taxon>Metazoa</taxon>
        <taxon>Chordata</taxon>
        <taxon>Craniata</taxon>
        <taxon>Vertebrata</taxon>
        <taxon>Euteleostomi</taxon>
        <taxon>Actinopterygii</taxon>
        <taxon>Neopterygii</taxon>
        <taxon>Teleostei</taxon>
        <taxon>Ostariophysi</taxon>
        <taxon>Cypriniformes</taxon>
        <taxon>Danionidae</taxon>
        <taxon>Danioninae</taxon>
        <taxon>Danio</taxon>
    </lineage>
</organism>
<comment type="function">
    <text evidence="1 7">Ligand for members of the frizzled family of seven transmembrane receptors. Can activate or inhibit canonical Wnt signaling, depending on receptor context. Required during embryogenesis for extension of the primary anterior-posterior axis. Regulates convergent extension movements and hypaxial myogenesis during gastrulation via activation of non-canonical Wnt signaling (PubMed:22406073).</text>
</comment>
<comment type="subcellular location">
    <subcellularLocation>
        <location evidence="4">Secreted</location>
        <location evidence="4">Extracellular space</location>
        <location evidence="4">Extracellular matrix</location>
    </subcellularLocation>
    <subcellularLocation>
        <location evidence="4">Secreted</location>
    </subcellularLocation>
</comment>
<comment type="developmental stage">
    <text evidence="7 8">Expressed both maternally and zygotically (Ref.1). Expressed in the germ ring at the blastoderm margin during the shield stage of gastrulation, expression is higher dorsally than ventrally (PubMed:22406073). Expressed at the posterior dorsal midline at the four-somite stage and in the pectoral fin bud 48 hours post-fertilization (PubMed:22406073). Zygotic expression begins during somitogenesis and is confined to the mesenchyme of the developing tailbud, the posterior 4-5 somites and the ventrolateral mesenchyme of the head (Ref.1). In later stages, expressed in the pharyngeal arch mesenchyme and pectoral finbuds (Ref.1). Not detected in mature chondrocytes (Ref.1).</text>
</comment>
<comment type="PTM">
    <text evidence="2 5">Palmitoleoylation is required for efficient binding to frizzled receptors. Depalmitoleoylation leads to Wnt signaling pathway inhibition.</text>
</comment>
<comment type="disruption phenotype">
    <text evidence="7">Morpholino knockdown results in convergent extension movement defects during gastrulation and an absence of myod1 expression in the majority of hypaxial muscle precursor cells.</text>
</comment>
<comment type="similarity">
    <text evidence="9">Belongs to the Wnt family.</text>
</comment>
<feature type="signal peptide" evidence="6">
    <location>
        <begin position="1"/>
        <end position="21"/>
    </location>
</feature>
<feature type="chain" id="PRO_0000041438" description="Protein Wnt-5b">
    <location>
        <begin position="22"/>
        <end position="363"/>
    </location>
</feature>
<feature type="lipid moiety-binding region" description="O-palmitoleoyl serine; by PORCN" evidence="5">
    <location>
        <position position="227"/>
    </location>
</feature>
<feature type="glycosylation site" description="N-linked (GlcNAc...) asparagine" evidence="6">
    <location>
        <position position="97"/>
    </location>
</feature>
<feature type="glycosylation site" description="N-linked (GlcNAc...) asparagine" evidence="6">
    <location>
        <position position="103"/>
    </location>
</feature>
<feature type="glycosylation site" description="N-linked (GlcNAc...) asparagine" evidence="6">
    <location>
        <position position="295"/>
    </location>
</feature>
<feature type="glycosylation site" description="N-linked (GlcNAc...) asparagine" evidence="6">
    <location>
        <position position="309"/>
    </location>
</feature>
<feature type="disulfide bond" evidence="3">
    <location>
        <begin position="87"/>
        <end position="98"/>
    </location>
</feature>
<feature type="disulfide bond" evidence="3">
    <location>
        <begin position="137"/>
        <end position="145"/>
    </location>
</feature>
<feature type="disulfide bond" evidence="3">
    <location>
        <begin position="147"/>
        <end position="165"/>
    </location>
</feature>
<feature type="disulfide bond" evidence="3">
    <location>
        <begin position="221"/>
        <end position="235"/>
    </location>
</feature>
<feature type="disulfide bond" evidence="3">
    <location>
        <begin position="223"/>
        <end position="230"/>
    </location>
</feature>
<feature type="disulfide bond" evidence="3">
    <location>
        <begin position="292"/>
        <end position="323"/>
    </location>
</feature>
<feature type="disulfide bond" evidence="3">
    <location>
        <begin position="308"/>
        <end position="318"/>
    </location>
</feature>
<feature type="disulfide bond" evidence="3">
    <location>
        <begin position="322"/>
        <end position="362"/>
    </location>
</feature>
<feature type="disulfide bond" evidence="3">
    <location>
        <begin position="338"/>
        <end position="353"/>
    </location>
</feature>
<feature type="disulfide bond" evidence="3">
    <location>
        <begin position="340"/>
        <end position="350"/>
    </location>
</feature>
<feature type="disulfide bond" evidence="3">
    <location>
        <begin position="345"/>
        <end position="346"/>
    </location>
</feature>
<sequence>MDVRMNQGHLLLAVTLIVCNSQLLVVANSWWSLAMNPIQRPEMYIIGAQPLCSQLTGLSQGQRKLCQLYQDHMVYIGEGAKTGIKECQYQFRQRRWNCSTVDNTSVFGRVMHIGSRETAFTYAVSAAGVVNAVSRACREGELSTCGCSRAARPRDLPRDWLWGGCGDNVNYGYRFAREFVDAREREKNYPRGSVEHARTLMNLQNNEAGRMAVYNLANVACKCHGVSGSCSLKTCWLQLADFRRVGEFLKEKYDSAAAMRINRRGKLELVNNRFNPPTGEDLVYIDPSPDYCLRNETTGSLGTQGRLCNKTSEGMDGCELMCCGRGYDQFKTYKHERCHCKFHWCCYVKCKRCTSLVDQFVCK</sequence>
<accession>Q92050</accession>
<accession>A5WVR7</accession>
<keyword id="KW-0217">Developmental protein</keyword>
<keyword id="KW-1015">Disulfide bond</keyword>
<keyword id="KW-0272">Extracellular matrix</keyword>
<keyword id="KW-0325">Glycoprotein</keyword>
<keyword id="KW-0449">Lipoprotein</keyword>
<keyword id="KW-1185">Reference proteome</keyword>
<keyword id="KW-0964">Secreted</keyword>
<keyword id="KW-0732">Signal</keyword>
<keyword id="KW-0879">Wnt signaling pathway</keyword>
<name>WNT5B_DANRE</name>
<gene>
    <name type="primary">wnt5b</name>
    <name type="synonym">wnt-5</name>
    <name type="synonym">wnt5</name>
    <name type="synonym">wnt5a</name>
    <name type="ORF">si:ch73-211c7.1</name>
</gene>
<proteinExistence type="evidence at transcript level"/>
<evidence type="ECO:0000250" key="1">
    <source>
        <dbReference type="UniProtKB" id="P22725"/>
    </source>
</evidence>
<evidence type="ECO:0000250" key="2">
    <source>
        <dbReference type="UniProtKB" id="P27467"/>
    </source>
</evidence>
<evidence type="ECO:0000250" key="3">
    <source>
        <dbReference type="UniProtKB" id="P28026"/>
    </source>
</evidence>
<evidence type="ECO:0000250" key="4">
    <source>
        <dbReference type="UniProtKB" id="P41221"/>
    </source>
</evidence>
<evidence type="ECO:0000250" key="5">
    <source>
        <dbReference type="UniProtKB" id="P56704"/>
    </source>
</evidence>
<evidence type="ECO:0000255" key="6"/>
<evidence type="ECO:0000269" key="7">
    <source>
    </source>
</evidence>
<evidence type="ECO:0000269" key="8">
    <source ref="1"/>
</evidence>
<evidence type="ECO:0000305" key="9"/>
<protein>
    <recommendedName>
        <fullName>Protein Wnt-5b</fullName>
    </recommendedName>
</protein>
<dbReference type="EMBL" id="U51268">
    <property type="protein sequence ID" value="AAA96519.1"/>
    <property type="molecule type" value="mRNA"/>
</dbReference>
<dbReference type="EMBL" id="CT025936">
    <property type="protein sequence ID" value="CAN88522.1"/>
    <property type="molecule type" value="Genomic_DNA"/>
</dbReference>
<dbReference type="RefSeq" id="NP_001349202.1">
    <property type="nucleotide sequence ID" value="NM_001362273.1"/>
</dbReference>
<dbReference type="RefSeq" id="NP_571012.1">
    <property type="nucleotide sequence ID" value="NM_130937.2"/>
</dbReference>
<dbReference type="RefSeq" id="XP_005164595.1">
    <property type="nucleotide sequence ID" value="XM_005164538.3"/>
</dbReference>
<dbReference type="RefSeq" id="XP_005164596.1">
    <property type="nucleotide sequence ID" value="XM_005164539.3"/>
</dbReference>
<dbReference type="SMR" id="Q92050"/>
<dbReference type="BioGRID" id="78343">
    <property type="interactions" value="6"/>
</dbReference>
<dbReference type="FunCoup" id="Q92050">
    <property type="interactions" value="1263"/>
</dbReference>
<dbReference type="STRING" id="7955.ENSDARP00000134193"/>
<dbReference type="GlyCosmos" id="Q92050">
    <property type="glycosylation" value="4 sites, No reported glycans"/>
</dbReference>
<dbReference type="PaxDb" id="7955-ENSDARP00000106303"/>
<dbReference type="Ensembl" id="ENSDART00000162065">
    <property type="protein sequence ID" value="ENSDARP00000134193"/>
    <property type="gene ID" value="ENSDARG00000102464"/>
</dbReference>
<dbReference type="Ensembl" id="ENSDART00000165181">
    <property type="protein sequence ID" value="ENSDARP00000131042"/>
    <property type="gene ID" value="ENSDARG00000102464"/>
</dbReference>
<dbReference type="Ensembl" id="ENSDART00000186829">
    <property type="protein sequence ID" value="ENSDARP00000152177"/>
    <property type="gene ID" value="ENSDARG00000102464"/>
</dbReference>
<dbReference type="GeneID" id="30105"/>
<dbReference type="KEGG" id="dre:30105"/>
<dbReference type="AGR" id="ZFIN:ZDB-GENE-980526-87"/>
<dbReference type="CTD" id="81029"/>
<dbReference type="ZFIN" id="ZDB-GENE-980526-87">
    <property type="gene designation" value="wnt5b"/>
</dbReference>
<dbReference type="eggNOG" id="KOG3913">
    <property type="taxonomic scope" value="Eukaryota"/>
</dbReference>
<dbReference type="HOGENOM" id="CLU_033039_0_1_1"/>
<dbReference type="InParanoid" id="Q92050"/>
<dbReference type="OMA" id="IQVERCH"/>
<dbReference type="PhylomeDB" id="Q92050"/>
<dbReference type="Reactome" id="R-DRE-3238698">
    <property type="pathway name" value="WNT ligand biogenesis and trafficking"/>
</dbReference>
<dbReference type="Reactome" id="R-DRE-4086400">
    <property type="pathway name" value="PCP/CE pathway"/>
</dbReference>
<dbReference type="PRO" id="PR:Q92050"/>
<dbReference type="Proteomes" id="UP000000437">
    <property type="component" value="Chromosome 4"/>
</dbReference>
<dbReference type="Bgee" id="ENSDARG00000102464">
    <property type="expression patterns" value="Expressed in pharyngeal gill and 39 other cell types or tissues"/>
</dbReference>
<dbReference type="ExpressionAtlas" id="Q92050">
    <property type="expression patterns" value="baseline and differential"/>
</dbReference>
<dbReference type="GO" id="GO:0005615">
    <property type="term" value="C:extracellular space"/>
    <property type="evidence" value="ECO:0000318"/>
    <property type="project" value="GO_Central"/>
</dbReference>
<dbReference type="GO" id="GO:0005125">
    <property type="term" value="F:cytokine activity"/>
    <property type="evidence" value="ECO:0000318"/>
    <property type="project" value="GO_Central"/>
</dbReference>
<dbReference type="GO" id="GO:0005109">
    <property type="term" value="F:frizzled binding"/>
    <property type="evidence" value="ECO:0000318"/>
    <property type="project" value="GO_Central"/>
</dbReference>
<dbReference type="GO" id="GO:0005102">
    <property type="term" value="F:signaling receptor binding"/>
    <property type="evidence" value="ECO:0000353"/>
    <property type="project" value="ZFIN"/>
</dbReference>
<dbReference type="GO" id="GO:0001667">
    <property type="term" value="P:ameboidal-type cell migration"/>
    <property type="evidence" value="ECO:0000315"/>
    <property type="project" value="ZFIN"/>
</dbReference>
<dbReference type="GO" id="GO:0001525">
    <property type="term" value="P:angiogenesis"/>
    <property type="evidence" value="ECO:0000315"/>
    <property type="project" value="ZFIN"/>
</dbReference>
<dbReference type="GO" id="GO:0060070">
    <property type="term" value="P:canonical Wnt signaling pathway"/>
    <property type="evidence" value="ECO:0000318"/>
    <property type="project" value="GO_Central"/>
</dbReference>
<dbReference type="GO" id="GO:0060536">
    <property type="term" value="P:cartilage morphogenesis"/>
    <property type="evidence" value="ECO:0000315"/>
    <property type="project" value="ZFIN"/>
</dbReference>
<dbReference type="GO" id="GO:0045165">
    <property type="term" value="P:cell fate commitment"/>
    <property type="evidence" value="ECO:0000318"/>
    <property type="project" value="GO_Central"/>
</dbReference>
<dbReference type="GO" id="GO:0042074">
    <property type="term" value="P:cell migration involved in gastrulation"/>
    <property type="evidence" value="ECO:0000315"/>
    <property type="project" value="ZFIN"/>
</dbReference>
<dbReference type="GO" id="GO:0002062">
    <property type="term" value="P:chondrocyte differentiation"/>
    <property type="evidence" value="ECO:0000315"/>
    <property type="project" value="ZFIN"/>
</dbReference>
<dbReference type="GO" id="GO:0060026">
    <property type="term" value="P:convergent extension"/>
    <property type="evidence" value="ECO:0000316"/>
    <property type="project" value="ZFIN"/>
</dbReference>
<dbReference type="GO" id="GO:0060028">
    <property type="term" value="P:convergent extension involved in axis elongation"/>
    <property type="evidence" value="ECO:0000315"/>
    <property type="project" value="ZFIN"/>
</dbReference>
<dbReference type="GO" id="GO:0060027">
    <property type="term" value="P:convergent extension involved in gastrulation"/>
    <property type="evidence" value="ECO:0000315"/>
    <property type="project" value="ZFIN"/>
</dbReference>
<dbReference type="GO" id="GO:0060030">
    <property type="term" value="P:dorsal convergence"/>
    <property type="evidence" value="ECO:0000315"/>
    <property type="project" value="ZFIN"/>
</dbReference>
<dbReference type="GO" id="GO:0010172">
    <property type="term" value="P:embryonic body morphogenesis"/>
    <property type="evidence" value="ECO:0000315"/>
    <property type="project" value="ZFIN"/>
</dbReference>
<dbReference type="GO" id="GO:0048701">
    <property type="term" value="P:embryonic cranial skeleton morphogenesis"/>
    <property type="evidence" value="ECO:0000315"/>
    <property type="project" value="ZFIN"/>
</dbReference>
<dbReference type="GO" id="GO:0048703">
    <property type="term" value="P:embryonic viscerocranium morphogenesis"/>
    <property type="evidence" value="ECO:0000315"/>
    <property type="project" value="ZFIN"/>
</dbReference>
<dbReference type="GO" id="GO:0001958">
    <property type="term" value="P:endochondral ossification"/>
    <property type="evidence" value="ECO:0000315"/>
    <property type="project" value="ZFIN"/>
</dbReference>
<dbReference type="GO" id="GO:0031018">
    <property type="term" value="P:endocrine pancreas development"/>
    <property type="evidence" value="ECO:0000315"/>
    <property type="project" value="ZFIN"/>
</dbReference>
<dbReference type="GO" id="GO:0031101">
    <property type="term" value="P:fin regeneration"/>
    <property type="evidence" value="ECO:0000315"/>
    <property type="project" value="ZFIN"/>
</dbReference>
<dbReference type="GO" id="GO:0001702">
    <property type="term" value="P:gastrulation with mouth forming second"/>
    <property type="evidence" value="ECO:0007669"/>
    <property type="project" value="Ensembl"/>
</dbReference>
<dbReference type="GO" id="GO:0090156">
    <property type="term" value="P:intracellular sphingolipid homeostasis"/>
    <property type="evidence" value="ECO:0000315"/>
    <property type="project" value="ZFIN"/>
</dbReference>
<dbReference type="GO" id="GO:0001946">
    <property type="term" value="P:lymphangiogenesis"/>
    <property type="evidence" value="ECO:0000315"/>
    <property type="project" value="ZFIN"/>
</dbReference>
<dbReference type="GO" id="GO:0021555">
    <property type="term" value="P:midbrain-hindbrain boundary morphogenesis"/>
    <property type="evidence" value="ECO:0000315"/>
    <property type="project" value="ZFIN"/>
</dbReference>
<dbReference type="GO" id="GO:0042692">
    <property type="term" value="P:muscle cell differentiation"/>
    <property type="evidence" value="ECO:0000315"/>
    <property type="project" value="UniProtKB"/>
</dbReference>
<dbReference type="GO" id="GO:0048884">
    <property type="term" value="P:neuromast development"/>
    <property type="evidence" value="ECO:0000315"/>
    <property type="project" value="ZFIN"/>
</dbReference>
<dbReference type="GO" id="GO:0030182">
    <property type="term" value="P:neuron differentiation"/>
    <property type="evidence" value="ECO:0000318"/>
    <property type="project" value="GO_Central"/>
</dbReference>
<dbReference type="GO" id="GO:0001503">
    <property type="term" value="P:ossification"/>
    <property type="evidence" value="ECO:0000315"/>
    <property type="project" value="ZFIN"/>
</dbReference>
<dbReference type="GO" id="GO:0048840">
    <property type="term" value="P:otolith development"/>
    <property type="evidence" value="ECO:0000315"/>
    <property type="project" value="ZFIN"/>
</dbReference>
<dbReference type="GO" id="GO:1904105">
    <property type="term" value="P:positive regulation of convergent extension involved in gastrulation"/>
    <property type="evidence" value="ECO:0000315"/>
    <property type="project" value="UniProtKB"/>
</dbReference>
<dbReference type="GO" id="GO:2000052">
    <property type="term" value="P:positive regulation of non-canonical Wnt signaling pathway"/>
    <property type="evidence" value="ECO:0000315"/>
    <property type="project" value="UniProtKB"/>
</dbReference>
<dbReference type="GO" id="GO:0036342">
    <property type="term" value="P:post-anal tail morphogenesis"/>
    <property type="evidence" value="ECO:0000315"/>
    <property type="project" value="ZFIN"/>
</dbReference>
<dbReference type="GO" id="GO:0008591">
    <property type="term" value="P:regulation of Wnt signaling pathway, calcium modulating pathway"/>
    <property type="evidence" value="ECO:0000315"/>
    <property type="project" value="ZFIN"/>
</dbReference>
<dbReference type="GO" id="GO:0051209">
    <property type="term" value="P:release of sequestered calcium ion into cytosol"/>
    <property type="evidence" value="ECO:0000314"/>
    <property type="project" value="ZFIN"/>
</dbReference>
<dbReference type="GO" id="GO:0001501">
    <property type="term" value="P:skeletal system development"/>
    <property type="evidence" value="ECO:0000315"/>
    <property type="project" value="ZFIN"/>
</dbReference>
<dbReference type="GO" id="GO:0061053">
    <property type="term" value="P:somite development"/>
    <property type="evidence" value="ECO:0000316"/>
    <property type="project" value="ZFIN"/>
</dbReference>
<dbReference type="GO" id="GO:0002574">
    <property type="term" value="P:thrombocyte differentiation"/>
    <property type="evidence" value="ECO:0000315"/>
    <property type="project" value="ZFIN"/>
</dbReference>
<dbReference type="GO" id="GO:0009826">
    <property type="term" value="P:unidimensional cell growth"/>
    <property type="evidence" value="ECO:0000315"/>
    <property type="project" value="ZFIN"/>
</dbReference>
<dbReference type="GO" id="GO:0007223">
    <property type="term" value="P:Wnt signaling pathway, calcium modulating pathway"/>
    <property type="evidence" value="ECO:0000314"/>
    <property type="project" value="ZFIN"/>
</dbReference>
<dbReference type="CDD" id="cd19348">
    <property type="entry name" value="Wnt_Wnt5b"/>
    <property type="match status" value="1"/>
</dbReference>
<dbReference type="FunFam" id="3.30.2460.20:FF:000001">
    <property type="entry name" value="Wnt homolog"/>
    <property type="match status" value="1"/>
</dbReference>
<dbReference type="Gene3D" id="3.30.2460.20">
    <property type="match status" value="1"/>
</dbReference>
<dbReference type="InterPro" id="IPR005817">
    <property type="entry name" value="Wnt"/>
</dbReference>
<dbReference type="InterPro" id="IPR043158">
    <property type="entry name" value="Wnt_C"/>
</dbReference>
<dbReference type="InterPro" id="IPR018161">
    <property type="entry name" value="Wnt_CS"/>
</dbReference>
<dbReference type="PANTHER" id="PTHR12027:SF87">
    <property type="entry name" value="PROTEIN WNT-5B"/>
    <property type="match status" value="1"/>
</dbReference>
<dbReference type="PANTHER" id="PTHR12027">
    <property type="entry name" value="WNT RELATED"/>
    <property type="match status" value="1"/>
</dbReference>
<dbReference type="Pfam" id="PF00110">
    <property type="entry name" value="wnt"/>
    <property type="match status" value="1"/>
</dbReference>
<dbReference type="PRINTS" id="PR01349">
    <property type="entry name" value="WNTPROTEIN"/>
</dbReference>
<dbReference type="SMART" id="SM00097">
    <property type="entry name" value="WNT1"/>
    <property type="match status" value="1"/>
</dbReference>
<dbReference type="PROSITE" id="PS00246">
    <property type="entry name" value="WNT1"/>
    <property type="match status" value="1"/>
</dbReference>
<reference key="1">
    <citation type="journal article" date="1996" name="Dev. Genes Evol.">
        <title>Three Wnt genes expressed in a wide variety of tissues during development of the zebrafish, Danio rerio: developmental and evolutionary perspectives.</title>
        <authorList>
            <person name="Blader P."/>
            <person name="Straehle U."/>
            <person name="Ingham P.W."/>
        </authorList>
    </citation>
    <scope>NUCLEOTIDE SEQUENCE [MRNA]</scope>
    <scope>DEVELOPMENTAL STAGE</scope>
    <source>
        <tissue>Embryo</tissue>
    </source>
</reference>
<reference key="2">
    <citation type="journal article" date="2013" name="Nature">
        <title>The zebrafish reference genome sequence and its relationship to the human genome.</title>
        <authorList>
            <person name="Howe K."/>
            <person name="Clark M.D."/>
            <person name="Torroja C.F."/>
            <person name="Torrance J."/>
            <person name="Berthelot C."/>
            <person name="Muffato M."/>
            <person name="Collins J.E."/>
            <person name="Humphray S."/>
            <person name="McLaren K."/>
            <person name="Matthews L."/>
            <person name="McLaren S."/>
            <person name="Sealy I."/>
            <person name="Caccamo M."/>
            <person name="Churcher C."/>
            <person name="Scott C."/>
            <person name="Barrett J.C."/>
            <person name="Koch R."/>
            <person name="Rauch G.J."/>
            <person name="White S."/>
            <person name="Chow W."/>
            <person name="Kilian B."/>
            <person name="Quintais L.T."/>
            <person name="Guerra-Assuncao J.A."/>
            <person name="Zhou Y."/>
            <person name="Gu Y."/>
            <person name="Yen J."/>
            <person name="Vogel J.H."/>
            <person name="Eyre T."/>
            <person name="Redmond S."/>
            <person name="Banerjee R."/>
            <person name="Chi J."/>
            <person name="Fu B."/>
            <person name="Langley E."/>
            <person name="Maguire S.F."/>
            <person name="Laird G.K."/>
            <person name="Lloyd D."/>
            <person name="Kenyon E."/>
            <person name="Donaldson S."/>
            <person name="Sehra H."/>
            <person name="Almeida-King J."/>
            <person name="Loveland J."/>
            <person name="Trevanion S."/>
            <person name="Jones M."/>
            <person name="Quail M."/>
            <person name="Willey D."/>
            <person name="Hunt A."/>
            <person name="Burton J."/>
            <person name="Sims S."/>
            <person name="McLay K."/>
            <person name="Plumb B."/>
            <person name="Davis J."/>
            <person name="Clee C."/>
            <person name="Oliver K."/>
            <person name="Clark R."/>
            <person name="Riddle C."/>
            <person name="Elliot D."/>
            <person name="Threadgold G."/>
            <person name="Harden G."/>
            <person name="Ware D."/>
            <person name="Begum S."/>
            <person name="Mortimore B."/>
            <person name="Kerry G."/>
            <person name="Heath P."/>
            <person name="Phillimore B."/>
            <person name="Tracey A."/>
            <person name="Corby N."/>
            <person name="Dunn M."/>
            <person name="Johnson C."/>
            <person name="Wood J."/>
            <person name="Clark S."/>
            <person name="Pelan S."/>
            <person name="Griffiths G."/>
            <person name="Smith M."/>
            <person name="Glithero R."/>
            <person name="Howden P."/>
            <person name="Barker N."/>
            <person name="Lloyd C."/>
            <person name="Stevens C."/>
            <person name="Harley J."/>
            <person name="Holt K."/>
            <person name="Panagiotidis G."/>
            <person name="Lovell J."/>
            <person name="Beasley H."/>
            <person name="Henderson C."/>
            <person name="Gordon D."/>
            <person name="Auger K."/>
            <person name="Wright D."/>
            <person name="Collins J."/>
            <person name="Raisen C."/>
            <person name="Dyer L."/>
            <person name="Leung K."/>
            <person name="Robertson L."/>
            <person name="Ambridge K."/>
            <person name="Leongamornlert D."/>
            <person name="McGuire S."/>
            <person name="Gilderthorp R."/>
            <person name="Griffiths C."/>
            <person name="Manthravadi D."/>
            <person name="Nichol S."/>
            <person name="Barker G."/>
            <person name="Whitehead S."/>
            <person name="Kay M."/>
            <person name="Brown J."/>
            <person name="Murnane C."/>
            <person name="Gray E."/>
            <person name="Humphries M."/>
            <person name="Sycamore N."/>
            <person name="Barker D."/>
            <person name="Saunders D."/>
            <person name="Wallis J."/>
            <person name="Babbage A."/>
            <person name="Hammond S."/>
            <person name="Mashreghi-Mohammadi M."/>
            <person name="Barr L."/>
            <person name="Martin S."/>
            <person name="Wray P."/>
            <person name="Ellington A."/>
            <person name="Matthews N."/>
            <person name="Ellwood M."/>
            <person name="Woodmansey R."/>
            <person name="Clark G."/>
            <person name="Cooper J."/>
            <person name="Tromans A."/>
            <person name="Grafham D."/>
            <person name="Skuce C."/>
            <person name="Pandian R."/>
            <person name="Andrews R."/>
            <person name="Harrison E."/>
            <person name="Kimberley A."/>
            <person name="Garnett J."/>
            <person name="Fosker N."/>
            <person name="Hall R."/>
            <person name="Garner P."/>
            <person name="Kelly D."/>
            <person name="Bird C."/>
            <person name="Palmer S."/>
            <person name="Gehring I."/>
            <person name="Berger A."/>
            <person name="Dooley C.M."/>
            <person name="Ersan-Urun Z."/>
            <person name="Eser C."/>
            <person name="Geiger H."/>
            <person name="Geisler M."/>
            <person name="Karotki L."/>
            <person name="Kirn A."/>
            <person name="Konantz J."/>
            <person name="Konantz M."/>
            <person name="Oberlander M."/>
            <person name="Rudolph-Geiger S."/>
            <person name="Teucke M."/>
            <person name="Lanz C."/>
            <person name="Raddatz G."/>
            <person name="Osoegawa K."/>
            <person name="Zhu B."/>
            <person name="Rapp A."/>
            <person name="Widaa S."/>
            <person name="Langford C."/>
            <person name="Yang F."/>
            <person name="Schuster S.C."/>
            <person name="Carter N.P."/>
            <person name="Harrow J."/>
            <person name="Ning Z."/>
            <person name="Herrero J."/>
            <person name="Searle S.M."/>
            <person name="Enright A."/>
            <person name="Geisler R."/>
            <person name="Plasterk R.H."/>
            <person name="Lee C."/>
            <person name="Westerfield M."/>
            <person name="de Jong P.J."/>
            <person name="Zon L.I."/>
            <person name="Postlethwait J.H."/>
            <person name="Nusslein-Volhard C."/>
            <person name="Hubbard T.J."/>
            <person name="Roest Crollius H."/>
            <person name="Rogers J."/>
            <person name="Stemple D.L."/>
        </authorList>
    </citation>
    <scope>NUCLEOTIDE SEQUENCE [LARGE SCALE GENOMIC DNA]</scope>
    <source>
        <strain>Tuebingen</strain>
    </source>
</reference>
<reference key="3">
    <citation type="journal article" date="2012" name="Biochim. Biophys. Acta">
        <title>Role of lbx2 in the noncanonical Wnt signaling pathway for convergence and extension movements and hypaxial myogenesis in zebrafish.</title>
        <authorList>
            <person name="Lou Q."/>
            <person name="He J."/>
            <person name="Hu L."/>
            <person name="Yin Z."/>
        </authorList>
    </citation>
    <scope>FUNCTION</scope>
    <scope>DEVELOPMENTAL STAGE</scope>
    <scope>DISRUPTION PHENOTYPE</scope>
</reference>